<name>RS14_POLAQ</name>
<comment type="function">
    <text evidence="1">Binds 16S rRNA, required for the assembly of 30S particles and may also be responsible for determining the conformation of the 16S rRNA at the A site.</text>
</comment>
<comment type="subunit">
    <text evidence="1">Part of the 30S ribosomal subunit. Contacts proteins S3 and S10.</text>
</comment>
<comment type="similarity">
    <text evidence="1">Belongs to the universal ribosomal protein uS14 family.</text>
</comment>
<feature type="chain" id="PRO_1000128492" description="Small ribosomal subunit protein uS14">
    <location>
        <begin position="1"/>
        <end position="101"/>
    </location>
</feature>
<proteinExistence type="inferred from homology"/>
<keyword id="KW-1185">Reference proteome</keyword>
<keyword id="KW-0687">Ribonucleoprotein</keyword>
<keyword id="KW-0689">Ribosomal protein</keyword>
<keyword id="KW-0694">RNA-binding</keyword>
<keyword id="KW-0699">rRNA-binding</keyword>
<reference key="1">
    <citation type="journal article" date="2012" name="Stand. Genomic Sci.">
        <title>Complete genome sequence of Polynucleobacter necessarius subsp. asymbioticus type strain (QLW-P1DMWA-1(T)).</title>
        <authorList>
            <person name="Meincke L."/>
            <person name="Copeland A."/>
            <person name="Lapidus A."/>
            <person name="Lucas S."/>
            <person name="Berry K.W."/>
            <person name="Del Rio T.G."/>
            <person name="Hammon N."/>
            <person name="Dalin E."/>
            <person name="Tice H."/>
            <person name="Pitluck S."/>
            <person name="Richardson P."/>
            <person name="Bruce D."/>
            <person name="Goodwin L."/>
            <person name="Han C."/>
            <person name="Tapia R."/>
            <person name="Detter J.C."/>
            <person name="Schmutz J."/>
            <person name="Brettin T."/>
            <person name="Larimer F."/>
            <person name="Land M."/>
            <person name="Hauser L."/>
            <person name="Kyrpides N.C."/>
            <person name="Ivanova N."/>
            <person name="Goker M."/>
            <person name="Woyke T."/>
            <person name="Wu Q.L."/>
            <person name="Pockl M."/>
            <person name="Hahn M.W."/>
            <person name="Klenk H.P."/>
        </authorList>
    </citation>
    <scope>NUCLEOTIDE SEQUENCE [LARGE SCALE GENOMIC DNA]</scope>
    <source>
        <strain>DSM 18221 / CIP 109841 / QLW-P1DMWA-1</strain>
    </source>
</reference>
<dbReference type="EMBL" id="CP000655">
    <property type="protein sequence ID" value="ABP33288.1"/>
    <property type="molecule type" value="Genomic_DNA"/>
</dbReference>
<dbReference type="RefSeq" id="WP_011901913.1">
    <property type="nucleotide sequence ID" value="NC_009379.1"/>
</dbReference>
<dbReference type="SMR" id="A4SUX4"/>
<dbReference type="GeneID" id="31480412"/>
<dbReference type="KEGG" id="pnu:Pnuc_0066"/>
<dbReference type="eggNOG" id="COG0199">
    <property type="taxonomic scope" value="Bacteria"/>
</dbReference>
<dbReference type="HOGENOM" id="CLU_139869_0_1_4"/>
<dbReference type="Proteomes" id="UP000000231">
    <property type="component" value="Chromosome"/>
</dbReference>
<dbReference type="GO" id="GO:0005737">
    <property type="term" value="C:cytoplasm"/>
    <property type="evidence" value="ECO:0007669"/>
    <property type="project" value="UniProtKB-ARBA"/>
</dbReference>
<dbReference type="GO" id="GO:0015935">
    <property type="term" value="C:small ribosomal subunit"/>
    <property type="evidence" value="ECO:0007669"/>
    <property type="project" value="TreeGrafter"/>
</dbReference>
<dbReference type="GO" id="GO:0019843">
    <property type="term" value="F:rRNA binding"/>
    <property type="evidence" value="ECO:0007669"/>
    <property type="project" value="UniProtKB-UniRule"/>
</dbReference>
<dbReference type="GO" id="GO:0003735">
    <property type="term" value="F:structural constituent of ribosome"/>
    <property type="evidence" value="ECO:0007669"/>
    <property type="project" value="InterPro"/>
</dbReference>
<dbReference type="GO" id="GO:0006412">
    <property type="term" value="P:translation"/>
    <property type="evidence" value="ECO:0007669"/>
    <property type="project" value="UniProtKB-UniRule"/>
</dbReference>
<dbReference type="FunFam" id="1.10.287.1480:FF:000001">
    <property type="entry name" value="30S ribosomal protein S14"/>
    <property type="match status" value="1"/>
</dbReference>
<dbReference type="Gene3D" id="1.10.287.1480">
    <property type="match status" value="1"/>
</dbReference>
<dbReference type="HAMAP" id="MF_00537">
    <property type="entry name" value="Ribosomal_uS14_1"/>
    <property type="match status" value="1"/>
</dbReference>
<dbReference type="InterPro" id="IPR001209">
    <property type="entry name" value="Ribosomal_uS14"/>
</dbReference>
<dbReference type="InterPro" id="IPR023036">
    <property type="entry name" value="Ribosomal_uS14_bac/plastid"/>
</dbReference>
<dbReference type="NCBIfam" id="NF006477">
    <property type="entry name" value="PRK08881.1"/>
    <property type="match status" value="1"/>
</dbReference>
<dbReference type="PANTHER" id="PTHR19836">
    <property type="entry name" value="30S RIBOSOMAL PROTEIN S14"/>
    <property type="match status" value="1"/>
</dbReference>
<dbReference type="PANTHER" id="PTHR19836:SF19">
    <property type="entry name" value="SMALL RIBOSOMAL SUBUNIT PROTEIN US14M"/>
    <property type="match status" value="1"/>
</dbReference>
<dbReference type="Pfam" id="PF00253">
    <property type="entry name" value="Ribosomal_S14"/>
    <property type="match status" value="1"/>
</dbReference>
<dbReference type="SUPFAM" id="SSF57716">
    <property type="entry name" value="Glucocorticoid receptor-like (DNA-binding domain)"/>
    <property type="match status" value="1"/>
</dbReference>
<evidence type="ECO:0000255" key="1">
    <source>
        <dbReference type="HAMAP-Rule" id="MF_00537"/>
    </source>
</evidence>
<evidence type="ECO:0000305" key="2"/>
<accession>A4SUX4</accession>
<gene>
    <name evidence="1" type="primary">rpsN</name>
    <name type="ordered locus">Pnuc_0066</name>
</gene>
<protein>
    <recommendedName>
        <fullName evidence="1">Small ribosomal subunit protein uS14</fullName>
    </recommendedName>
    <alternativeName>
        <fullName evidence="2">30S ribosomal protein S14</fullName>
    </alternativeName>
</protein>
<sequence length="101" mass="11656">MAKLSLIERENKRAKTVEKYAVKRAELKAIIADQSRSDEERYEARLKLQALPRNASPIRQRNRCSLTGRPRGTFRKFGLARSKIREIAFRGEIPGLTKASW</sequence>
<organism>
    <name type="scientific">Polynucleobacter asymbioticus (strain DSM 18221 / CIP 109841 / QLW-P1DMWA-1)</name>
    <name type="common">Polynucleobacter necessarius subsp. asymbioticus</name>
    <dbReference type="NCBI Taxonomy" id="312153"/>
    <lineage>
        <taxon>Bacteria</taxon>
        <taxon>Pseudomonadati</taxon>
        <taxon>Pseudomonadota</taxon>
        <taxon>Betaproteobacteria</taxon>
        <taxon>Burkholderiales</taxon>
        <taxon>Burkholderiaceae</taxon>
        <taxon>Polynucleobacter</taxon>
    </lineage>
</organism>